<sequence length="603" mass="68011">MSERMQYIRNFCIIAHIDHGKSTLADRLIEKTGFLSERETDKQILDNLELERERGITIKLKPVRMIYKAKDGNEYELNLIDTPGHVDFTYEVSRSIAACEGALLVVDATQGIEAQTLANVYMALEHDLEIVPVINKIDLPSANPEHVKKEIEDVIGIDAEDALLTSAKEGIGIEEVLEAIVNRIPPPKGDENKPLKALIFDSFYDNYKGAISFVRVVDGIVKPGMRIKMFSTGKVFEVTEVGMFRPNLYPVEELKAGEVGYIAASIKNVKDTRVGDTITDADNPADFPLPGYKEVVPMVFCGIYPADGQDYENLKEALEKLQLNDASLVFEPDTSAALGFGFRCGFLGLLHMEIVQERLEREYNLNLVTTAPSVIYKVYKTNGEVLDLDNPTKMPPPTQIDHIEEPIVEATIMVPTEYVGAVMELCQDRRGAYLGMEYLEQTRVLLKYEMPLNEIIYDFFDALKSRTRGYASFDYELKGYKESNLVKLDILINGELVDALSMIVHKDKAYEKARKIVEKLKENIPRHLFEIPIQAAIGSKIIARETVKALRKNVLAKCYGGDVTRKKKLLEKQKEGKKRMRQVGSVEIPQEAFMSILKLDDEK</sequence>
<organism>
    <name type="scientific">Thermoanaerobacter sp. (strain X514)</name>
    <dbReference type="NCBI Taxonomy" id="399726"/>
    <lineage>
        <taxon>Bacteria</taxon>
        <taxon>Bacillati</taxon>
        <taxon>Bacillota</taxon>
        <taxon>Clostridia</taxon>
        <taxon>Thermoanaerobacterales</taxon>
        <taxon>Thermoanaerobacteraceae</taxon>
        <taxon>Thermoanaerobacter</taxon>
    </lineage>
</organism>
<keyword id="KW-1003">Cell membrane</keyword>
<keyword id="KW-0342">GTP-binding</keyword>
<keyword id="KW-0378">Hydrolase</keyword>
<keyword id="KW-0472">Membrane</keyword>
<keyword id="KW-0547">Nucleotide-binding</keyword>
<keyword id="KW-0648">Protein biosynthesis</keyword>
<gene>
    <name evidence="1" type="primary">lepA</name>
    <name type="ordered locus">Teth514_2083</name>
</gene>
<comment type="function">
    <text evidence="1">Required for accurate and efficient protein synthesis under certain stress conditions. May act as a fidelity factor of the translation reaction, by catalyzing a one-codon backward translocation of tRNAs on improperly translocated ribosomes. Back-translocation proceeds from a post-translocation (POST) complex to a pre-translocation (PRE) complex, thus giving elongation factor G a second chance to translocate the tRNAs correctly. Binds to ribosomes in a GTP-dependent manner.</text>
</comment>
<comment type="catalytic activity">
    <reaction evidence="1">
        <text>GTP + H2O = GDP + phosphate + H(+)</text>
        <dbReference type="Rhea" id="RHEA:19669"/>
        <dbReference type="ChEBI" id="CHEBI:15377"/>
        <dbReference type="ChEBI" id="CHEBI:15378"/>
        <dbReference type="ChEBI" id="CHEBI:37565"/>
        <dbReference type="ChEBI" id="CHEBI:43474"/>
        <dbReference type="ChEBI" id="CHEBI:58189"/>
        <dbReference type="EC" id="3.6.5.n1"/>
    </reaction>
</comment>
<comment type="subcellular location">
    <subcellularLocation>
        <location evidence="1">Cell membrane</location>
        <topology evidence="1">Peripheral membrane protein</topology>
        <orientation evidence="1">Cytoplasmic side</orientation>
    </subcellularLocation>
</comment>
<comment type="similarity">
    <text evidence="1">Belongs to the TRAFAC class translation factor GTPase superfamily. Classic translation factor GTPase family. LepA subfamily.</text>
</comment>
<accession>B0K3Y4</accession>
<evidence type="ECO:0000255" key="1">
    <source>
        <dbReference type="HAMAP-Rule" id="MF_00071"/>
    </source>
</evidence>
<name>LEPA_THEPX</name>
<protein>
    <recommendedName>
        <fullName evidence="1">Elongation factor 4</fullName>
        <shortName evidence="1">EF-4</shortName>
        <ecNumber evidence="1">3.6.5.n1</ecNumber>
    </recommendedName>
    <alternativeName>
        <fullName evidence="1">Ribosomal back-translocase LepA</fullName>
    </alternativeName>
</protein>
<reference key="1">
    <citation type="submission" date="2008-01" db="EMBL/GenBank/DDBJ databases">
        <title>Complete sequence of Thermoanaerobacter sp. X514.</title>
        <authorList>
            <consortium name="US DOE Joint Genome Institute"/>
            <person name="Copeland A."/>
            <person name="Lucas S."/>
            <person name="Lapidus A."/>
            <person name="Barry K."/>
            <person name="Glavina del Rio T."/>
            <person name="Dalin E."/>
            <person name="Tice H."/>
            <person name="Pitluck S."/>
            <person name="Bruce D."/>
            <person name="Goodwin L."/>
            <person name="Saunders E."/>
            <person name="Brettin T."/>
            <person name="Detter J.C."/>
            <person name="Han C."/>
            <person name="Schmutz J."/>
            <person name="Larimer F."/>
            <person name="Land M."/>
            <person name="Hauser L."/>
            <person name="Kyrpides N."/>
            <person name="Kim E."/>
            <person name="Hemme C."/>
            <person name="Fields M.W."/>
            <person name="He Z."/>
            <person name="Zhou J."/>
            <person name="Richardson P."/>
        </authorList>
    </citation>
    <scope>NUCLEOTIDE SEQUENCE [LARGE SCALE GENOMIC DNA]</scope>
    <source>
        <strain>X514</strain>
    </source>
</reference>
<dbReference type="EC" id="3.6.5.n1" evidence="1"/>
<dbReference type="EMBL" id="CP000923">
    <property type="protein sequence ID" value="ABY93355.1"/>
    <property type="molecule type" value="Genomic_DNA"/>
</dbReference>
<dbReference type="RefSeq" id="WP_009052600.1">
    <property type="nucleotide sequence ID" value="NC_010320.1"/>
</dbReference>
<dbReference type="SMR" id="B0K3Y4"/>
<dbReference type="KEGG" id="tex:Teth514_2083"/>
<dbReference type="HOGENOM" id="CLU_009995_3_3_9"/>
<dbReference type="Proteomes" id="UP000002155">
    <property type="component" value="Chromosome"/>
</dbReference>
<dbReference type="GO" id="GO:0005886">
    <property type="term" value="C:plasma membrane"/>
    <property type="evidence" value="ECO:0007669"/>
    <property type="project" value="UniProtKB-SubCell"/>
</dbReference>
<dbReference type="GO" id="GO:0005525">
    <property type="term" value="F:GTP binding"/>
    <property type="evidence" value="ECO:0007669"/>
    <property type="project" value="UniProtKB-UniRule"/>
</dbReference>
<dbReference type="GO" id="GO:0003924">
    <property type="term" value="F:GTPase activity"/>
    <property type="evidence" value="ECO:0007669"/>
    <property type="project" value="UniProtKB-UniRule"/>
</dbReference>
<dbReference type="GO" id="GO:0043022">
    <property type="term" value="F:ribosome binding"/>
    <property type="evidence" value="ECO:0007669"/>
    <property type="project" value="UniProtKB-UniRule"/>
</dbReference>
<dbReference type="GO" id="GO:0003746">
    <property type="term" value="F:translation elongation factor activity"/>
    <property type="evidence" value="ECO:0007669"/>
    <property type="project" value="UniProtKB-UniRule"/>
</dbReference>
<dbReference type="GO" id="GO:0045727">
    <property type="term" value="P:positive regulation of translation"/>
    <property type="evidence" value="ECO:0007669"/>
    <property type="project" value="UniProtKB-UniRule"/>
</dbReference>
<dbReference type="CDD" id="cd03699">
    <property type="entry name" value="EF4_II"/>
    <property type="match status" value="1"/>
</dbReference>
<dbReference type="CDD" id="cd16260">
    <property type="entry name" value="EF4_III"/>
    <property type="match status" value="1"/>
</dbReference>
<dbReference type="CDD" id="cd01890">
    <property type="entry name" value="LepA"/>
    <property type="match status" value="1"/>
</dbReference>
<dbReference type="CDD" id="cd03709">
    <property type="entry name" value="lepA_C"/>
    <property type="match status" value="1"/>
</dbReference>
<dbReference type="FunFam" id="3.40.50.300:FF:000078">
    <property type="entry name" value="Elongation factor 4"/>
    <property type="match status" value="1"/>
</dbReference>
<dbReference type="FunFam" id="2.40.30.10:FF:000015">
    <property type="entry name" value="Translation factor GUF1, mitochondrial"/>
    <property type="match status" value="1"/>
</dbReference>
<dbReference type="FunFam" id="3.30.70.240:FF:000007">
    <property type="entry name" value="Translation factor GUF1, mitochondrial"/>
    <property type="match status" value="1"/>
</dbReference>
<dbReference type="FunFam" id="3.30.70.2570:FF:000001">
    <property type="entry name" value="Translation factor GUF1, mitochondrial"/>
    <property type="match status" value="1"/>
</dbReference>
<dbReference type="FunFam" id="3.30.70.870:FF:000004">
    <property type="entry name" value="Translation factor GUF1, mitochondrial"/>
    <property type="match status" value="1"/>
</dbReference>
<dbReference type="Gene3D" id="3.30.70.240">
    <property type="match status" value="1"/>
</dbReference>
<dbReference type="Gene3D" id="3.30.70.2570">
    <property type="entry name" value="Elongation factor 4, C-terminal domain"/>
    <property type="match status" value="1"/>
</dbReference>
<dbReference type="Gene3D" id="3.30.70.870">
    <property type="entry name" value="Elongation Factor G (Translational Gtpase), domain 3"/>
    <property type="match status" value="1"/>
</dbReference>
<dbReference type="Gene3D" id="3.40.50.300">
    <property type="entry name" value="P-loop containing nucleotide triphosphate hydrolases"/>
    <property type="match status" value="1"/>
</dbReference>
<dbReference type="Gene3D" id="2.40.30.10">
    <property type="entry name" value="Translation factors"/>
    <property type="match status" value="1"/>
</dbReference>
<dbReference type="HAMAP" id="MF_00071">
    <property type="entry name" value="LepA"/>
    <property type="match status" value="1"/>
</dbReference>
<dbReference type="InterPro" id="IPR006297">
    <property type="entry name" value="EF-4"/>
</dbReference>
<dbReference type="InterPro" id="IPR041095">
    <property type="entry name" value="EFG_II"/>
</dbReference>
<dbReference type="InterPro" id="IPR035647">
    <property type="entry name" value="EFG_III/V"/>
</dbReference>
<dbReference type="InterPro" id="IPR000640">
    <property type="entry name" value="EFG_V-like"/>
</dbReference>
<dbReference type="InterPro" id="IPR004161">
    <property type="entry name" value="EFTu-like_2"/>
</dbReference>
<dbReference type="InterPro" id="IPR031157">
    <property type="entry name" value="G_TR_CS"/>
</dbReference>
<dbReference type="InterPro" id="IPR038363">
    <property type="entry name" value="LepA_C_sf"/>
</dbReference>
<dbReference type="InterPro" id="IPR013842">
    <property type="entry name" value="LepA_CTD"/>
</dbReference>
<dbReference type="InterPro" id="IPR035654">
    <property type="entry name" value="LepA_IV"/>
</dbReference>
<dbReference type="InterPro" id="IPR027417">
    <property type="entry name" value="P-loop_NTPase"/>
</dbReference>
<dbReference type="InterPro" id="IPR005225">
    <property type="entry name" value="Small_GTP-bd"/>
</dbReference>
<dbReference type="InterPro" id="IPR000795">
    <property type="entry name" value="T_Tr_GTP-bd_dom"/>
</dbReference>
<dbReference type="InterPro" id="IPR009000">
    <property type="entry name" value="Transl_B-barrel_sf"/>
</dbReference>
<dbReference type="NCBIfam" id="TIGR01393">
    <property type="entry name" value="lepA"/>
    <property type="match status" value="1"/>
</dbReference>
<dbReference type="NCBIfam" id="TIGR00231">
    <property type="entry name" value="small_GTP"/>
    <property type="match status" value="1"/>
</dbReference>
<dbReference type="PANTHER" id="PTHR43512:SF4">
    <property type="entry name" value="TRANSLATION FACTOR GUF1 HOMOLOG, CHLOROPLASTIC"/>
    <property type="match status" value="1"/>
</dbReference>
<dbReference type="PANTHER" id="PTHR43512">
    <property type="entry name" value="TRANSLATION FACTOR GUF1-RELATED"/>
    <property type="match status" value="1"/>
</dbReference>
<dbReference type="Pfam" id="PF00679">
    <property type="entry name" value="EFG_C"/>
    <property type="match status" value="1"/>
</dbReference>
<dbReference type="Pfam" id="PF14492">
    <property type="entry name" value="EFG_III"/>
    <property type="match status" value="1"/>
</dbReference>
<dbReference type="Pfam" id="PF00009">
    <property type="entry name" value="GTP_EFTU"/>
    <property type="match status" value="1"/>
</dbReference>
<dbReference type="Pfam" id="PF03144">
    <property type="entry name" value="GTP_EFTU_D2"/>
    <property type="match status" value="1"/>
</dbReference>
<dbReference type="Pfam" id="PF06421">
    <property type="entry name" value="LepA_C"/>
    <property type="match status" value="1"/>
</dbReference>
<dbReference type="PRINTS" id="PR00315">
    <property type="entry name" value="ELONGATNFCT"/>
</dbReference>
<dbReference type="SMART" id="SM00838">
    <property type="entry name" value="EFG_C"/>
    <property type="match status" value="1"/>
</dbReference>
<dbReference type="SUPFAM" id="SSF54980">
    <property type="entry name" value="EF-G C-terminal domain-like"/>
    <property type="match status" value="2"/>
</dbReference>
<dbReference type="SUPFAM" id="SSF52540">
    <property type="entry name" value="P-loop containing nucleoside triphosphate hydrolases"/>
    <property type="match status" value="1"/>
</dbReference>
<dbReference type="SUPFAM" id="SSF50447">
    <property type="entry name" value="Translation proteins"/>
    <property type="match status" value="1"/>
</dbReference>
<dbReference type="PROSITE" id="PS00301">
    <property type="entry name" value="G_TR_1"/>
    <property type="match status" value="1"/>
</dbReference>
<dbReference type="PROSITE" id="PS51722">
    <property type="entry name" value="G_TR_2"/>
    <property type="match status" value="1"/>
</dbReference>
<feature type="chain" id="PRO_1000092457" description="Elongation factor 4">
    <location>
        <begin position="1"/>
        <end position="603"/>
    </location>
</feature>
<feature type="domain" description="tr-type G">
    <location>
        <begin position="6"/>
        <end position="188"/>
    </location>
</feature>
<feature type="binding site" evidence="1">
    <location>
        <begin position="18"/>
        <end position="23"/>
    </location>
    <ligand>
        <name>GTP</name>
        <dbReference type="ChEBI" id="CHEBI:37565"/>
    </ligand>
</feature>
<feature type="binding site" evidence="1">
    <location>
        <begin position="135"/>
        <end position="138"/>
    </location>
    <ligand>
        <name>GTP</name>
        <dbReference type="ChEBI" id="CHEBI:37565"/>
    </ligand>
</feature>
<proteinExistence type="inferred from homology"/>